<geneLocation type="chloroplast"/>
<proteinExistence type="inferred from homology"/>
<dbReference type="EMBL" id="Z11874">
    <property type="protein sequence ID" value="CAA77916.1"/>
    <property type="molecule type" value="Genomic_DNA"/>
</dbReference>
<dbReference type="EMBL" id="M37463">
    <property type="protein sequence ID" value="AAA84223.1"/>
    <property type="molecule type" value="Genomic_DNA"/>
</dbReference>
<dbReference type="EMBL" id="X70810">
    <property type="protein sequence ID" value="CAA50099.1"/>
    <property type="molecule type" value="Genomic_DNA"/>
</dbReference>
<dbReference type="PIR" id="S26080">
    <property type="entry name" value="S26080"/>
</dbReference>
<dbReference type="RefSeq" id="NP_041912.1">
    <property type="nucleotide sequence ID" value="NC_001603.2"/>
</dbReference>
<dbReference type="SMR" id="P19167"/>
<dbReference type="GeneID" id="807499"/>
<dbReference type="GO" id="GO:0009507">
    <property type="term" value="C:chloroplast"/>
    <property type="evidence" value="ECO:0007669"/>
    <property type="project" value="UniProtKB-SubCell"/>
</dbReference>
<dbReference type="GO" id="GO:1990904">
    <property type="term" value="C:ribonucleoprotein complex"/>
    <property type="evidence" value="ECO:0007669"/>
    <property type="project" value="UniProtKB-KW"/>
</dbReference>
<dbReference type="GO" id="GO:0005840">
    <property type="term" value="C:ribosome"/>
    <property type="evidence" value="ECO:0007669"/>
    <property type="project" value="UniProtKB-KW"/>
</dbReference>
<dbReference type="GO" id="GO:0019843">
    <property type="term" value="F:rRNA binding"/>
    <property type="evidence" value="ECO:0007669"/>
    <property type="project" value="UniProtKB-UniRule"/>
</dbReference>
<dbReference type="GO" id="GO:0003735">
    <property type="term" value="F:structural constituent of ribosome"/>
    <property type="evidence" value="ECO:0007669"/>
    <property type="project" value="InterPro"/>
</dbReference>
<dbReference type="GO" id="GO:0006412">
    <property type="term" value="P:translation"/>
    <property type="evidence" value="ECO:0007669"/>
    <property type="project" value="UniProtKB-UniRule"/>
</dbReference>
<dbReference type="Gene3D" id="3.30.70.330">
    <property type="match status" value="1"/>
</dbReference>
<dbReference type="HAMAP" id="MF_01369_B">
    <property type="entry name" value="Ribosomal_uL23_B"/>
    <property type="match status" value="1"/>
</dbReference>
<dbReference type="InterPro" id="IPR012677">
    <property type="entry name" value="Nucleotide-bd_a/b_plait_sf"/>
</dbReference>
<dbReference type="InterPro" id="IPR013025">
    <property type="entry name" value="Ribosomal_uL23-like"/>
</dbReference>
<dbReference type="InterPro" id="IPR012678">
    <property type="entry name" value="Ribosomal_uL23/eL15/eS24_sf"/>
</dbReference>
<dbReference type="InterPro" id="IPR001014">
    <property type="entry name" value="Ribosomal_uL23_CS"/>
</dbReference>
<dbReference type="Pfam" id="PF00276">
    <property type="entry name" value="Ribosomal_L23"/>
    <property type="match status" value="1"/>
</dbReference>
<dbReference type="SUPFAM" id="SSF54189">
    <property type="entry name" value="Ribosomal proteins S24e, L23 and L15e"/>
    <property type="match status" value="1"/>
</dbReference>
<dbReference type="PROSITE" id="PS00050">
    <property type="entry name" value="RIBOSOMAL_L23"/>
    <property type="match status" value="1"/>
</dbReference>
<protein>
    <recommendedName>
        <fullName evidence="2">Large ribosomal subunit protein uL23c</fullName>
    </recommendedName>
    <alternativeName>
        <fullName>50S ribosomal protein L23, chloroplastic</fullName>
    </alternativeName>
</protein>
<organism>
    <name type="scientific">Euglena gracilis</name>
    <dbReference type="NCBI Taxonomy" id="3039"/>
    <lineage>
        <taxon>Eukaryota</taxon>
        <taxon>Discoba</taxon>
        <taxon>Euglenozoa</taxon>
        <taxon>Euglenida</taxon>
        <taxon>Spirocuta</taxon>
        <taxon>Euglenophyceae</taxon>
        <taxon>Euglenales</taxon>
        <taxon>Euglenaceae</taxon>
        <taxon>Euglena</taxon>
    </lineage>
</organism>
<name>RK23_EUGGR</name>
<reference key="1">
    <citation type="journal article" date="1988" name="Curr. Genet.">
        <title>Organization of ribosomal protein genes rpl23, rpl2, rps19, rpl22 and rps3 on the Euglena gracilis chloroplast genome.</title>
        <authorList>
            <person name="Christopher D.A."/>
            <person name="Cushman J.C."/>
            <person name="Price C.A."/>
            <person name="Hallick R.B."/>
        </authorList>
    </citation>
    <scope>NUCLEOTIDE SEQUENCE [GENOMIC DNA]</scope>
    <source>
        <strain>Z / UTEX 753</strain>
    </source>
</reference>
<reference key="2">
    <citation type="journal article" date="1993" name="Nucleic Acids Res.">
        <title>Complete sequence of Euglena gracilis chloroplast DNA.</title>
        <authorList>
            <person name="Hallick R.B."/>
            <person name="Hong L."/>
            <person name="Drager R.G."/>
            <person name="Favreau M.R."/>
            <person name="Monfort A."/>
            <person name="Orsat B."/>
            <person name="Spielmann A."/>
            <person name="Stutz E."/>
        </authorList>
    </citation>
    <scope>NUCLEOTIDE SEQUENCE [LARGE SCALE GENOMIC DNA]</scope>
    <source>
        <strain>Z / UTEX 753</strain>
    </source>
</reference>
<comment type="function">
    <text evidence="1">Binds to 23S rRNA.</text>
</comment>
<comment type="subunit">
    <text evidence="1">Part of the 50S ribosomal subunit.</text>
</comment>
<comment type="subcellular location">
    <subcellularLocation>
        <location>Plastid</location>
        <location>Chloroplast</location>
    </subcellularLocation>
</comment>
<comment type="similarity">
    <text evidence="2">Belongs to the universal ribosomal protein uL23 family.</text>
</comment>
<feature type="chain" id="PRO_0000129449" description="Large ribosomal subunit protein uL23c">
    <location>
        <begin position="1"/>
        <end position="100"/>
    </location>
</feature>
<sequence length="100" mass="12166">MFYFISRKFYDQFKYGILTDKTNKLLKNNVYTFDVDIQMSKRQFKDLIETAFSVKITSVNSYVKSSKYYRSNNFEGMKKYYKRMFIKLNDLETIPFFSCL</sequence>
<gene>
    <name type="primary">rpl23</name>
</gene>
<keyword id="KW-0150">Chloroplast</keyword>
<keyword id="KW-0934">Plastid</keyword>
<keyword id="KW-0687">Ribonucleoprotein</keyword>
<keyword id="KW-0689">Ribosomal protein</keyword>
<keyword id="KW-0694">RNA-binding</keyword>
<keyword id="KW-0699">rRNA-binding</keyword>
<accession>P19167</accession>
<evidence type="ECO:0000250" key="1"/>
<evidence type="ECO:0000305" key="2"/>